<comment type="function">
    <molecule>Heme oxygenase 1</molecule>
    <text evidence="2 6">Catalyzes the oxidative cleavage of heme at the alpha-methene bridge carbon, released as carbon monoxide (CO), to generate biliverdin IXalpha, while releasing the central heme iron chelate as ferrous iron (PubMed:6806282). Affords protection against programmed cell death and this cytoprotective effect relies on its ability to catabolize free heme and prevent it from sensitizing cells to undergo apoptosis (By similarity).</text>
</comment>
<comment type="function">
    <molecule>Heme oxygenase 1 soluble form</molecule>
    <text evidence="2">Catalyzes the oxidative cleavage of heme at the alpha-methene bridge carbon, released as carbon monoxide (CO), to generate biliverdin IXalpha, while releasing the central heme iron chelate as ferrous iron.</text>
</comment>
<comment type="catalytic activity">
    <reaction evidence="6">
        <text>heme b + 3 reduced [NADPH--hemoprotein reductase] + 3 O2 = biliverdin IXalpha + CO + Fe(2+) + 3 oxidized [NADPH--hemoprotein reductase] + 3 H2O + H(+)</text>
        <dbReference type="Rhea" id="RHEA:21764"/>
        <dbReference type="Rhea" id="RHEA-COMP:11964"/>
        <dbReference type="Rhea" id="RHEA-COMP:11965"/>
        <dbReference type="ChEBI" id="CHEBI:15377"/>
        <dbReference type="ChEBI" id="CHEBI:15378"/>
        <dbReference type="ChEBI" id="CHEBI:15379"/>
        <dbReference type="ChEBI" id="CHEBI:17245"/>
        <dbReference type="ChEBI" id="CHEBI:29033"/>
        <dbReference type="ChEBI" id="CHEBI:57618"/>
        <dbReference type="ChEBI" id="CHEBI:57991"/>
        <dbReference type="ChEBI" id="CHEBI:58210"/>
        <dbReference type="ChEBI" id="CHEBI:60344"/>
        <dbReference type="EC" id="1.14.14.18"/>
    </reaction>
    <physiologicalReaction direction="left-to-right" evidence="8">
        <dbReference type="Rhea" id="RHEA:21765"/>
    </physiologicalReaction>
</comment>
<comment type="activity regulation">
    <text evidence="6">Inhibited by metalloporphyrins such as Sn-, Co-, Mn- and Zn-protoporphyrins.</text>
</comment>
<comment type="biophysicochemical properties">
    <kinetics>
        <KM evidence="6">0.93 uM for heme b</KM>
    </kinetics>
</comment>
<comment type="subunit">
    <text evidence="3">Homodimer and higher order homooligomer. Oligomerization is crucial for its stability and function in the endoplasmic reticulum. Interacts with FLVCR2; this interaction is potentiated in the presence of heme.</text>
</comment>
<comment type="subcellular location">
    <subcellularLocation>
        <location evidence="2">Endoplasmic reticulum membrane</location>
        <topology evidence="4">Single-pass type IV membrane protein</topology>
        <orientation evidence="2">Cytoplasmic side</orientation>
    </subcellularLocation>
</comment>
<comment type="domain">
    <text evidence="2">The transmembrane domain is necessary for its oligomerization.</text>
</comment>
<comment type="PTM">
    <text evidence="2">A soluble form arises by proteolytic removal of the membrane anchor.</text>
</comment>
<comment type="similarity">
    <text evidence="7">Belongs to the heme oxygenase family.</text>
</comment>
<keyword id="KW-0053">Apoptosis</keyword>
<keyword id="KW-0903">Direct protein sequencing</keyword>
<keyword id="KW-0256">Endoplasmic reticulum</keyword>
<keyword id="KW-0349">Heme</keyword>
<keyword id="KW-0408">Iron</keyword>
<keyword id="KW-0472">Membrane</keyword>
<keyword id="KW-0479">Metal-binding</keyword>
<keyword id="KW-0560">Oxidoreductase</keyword>
<keyword id="KW-0597">Phosphoprotein</keyword>
<keyword id="KW-1185">Reference proteome</keyword>
<keyword id="KW-0812">Transmembrane</keyword>
<keyword id="KW-1133">Transmembrane helix</keyword>
<gene>
    <name type="primary">HMOX1</name>
</gene>
<protein>
    <recommendedName>
        <fullName>Heme oxygenase 1</fullName>
        <shortName>HO-1</shortName>
        <ecNumber evidence="6">1.14.14.18</ecNumber>
    </recommendedName>
    <component>
        <recommendedName>
            <fullName evidence="2">Heme oxygenase 1 soluble form</fullName>
        </recommendedName>
    </component>
</protein>
<proteinExistence type="evidence at protein level"/>
<organism>
    <name type="scientific">Bos taurus</name>
    <name type="common">Bovine</name>
    <dbReference type="NCBI Taxonomy" id="9913"/>
    <lineage>
        <taxon>Eukaryota</taxon>
        <taxon>Metazoa</taxon>
        <taxon>Chordata</taxon>
        <taxon>Craniata</taxon>
        <taxon>Vertebrata</taxon>
        <taxon>Euteleostomi</taxon>
        <taxon>Mammalia</taxon>
        <taxon>Eutheria</taxon>
        <taxon>Laurasiatheria</taxon>
        <taxon>Artiodactyla</taxon>
        <taxon>Ruminantia</taxon>
        <taxon>Pecora</taxon>
        <taxon>Bovidae</taxon>
        <taxon>Bovinae</taxon>
        <taxon>Bos</taxon>
    </lineage>
</organism>
<sequence length="289" mass="32940">MERPQPDSSMPQDLSEALKEATKEVHTQAENAEFMKNFQKGELTQEGFKLVMASLYHIYVALEEEIERNKENPVYTPLYFPEELHRRASLEQDMAFWYGPRWQEAIPYTQATKRYVQRLQEVGRTEPELLVAHAYTRYLGDLSGGQVLKKIAQKALNLPSSGEGLAFFTFPNIASATKFKQLYRSRMNTLEMTPEVRQRVLDEAKTAFLLNIQLFEELQGLLTQKAKDHDPLQAPELHRRAGSKVQDLAPTKASRGKPQPSVLSQAPLLRWVLTLSFLVATVAVGLYAM</sequence>
<evidence type="ECO:0000250" key="1">
    <source>
        <dbReference type="UniProtKB" id="P06762"/>
    </source>
</evidence>
<evidence type="ECO:0000250" key="2">
    <source>
        <dbReference type="UniProtKB" id="P09601"/>
    </source>
</evidence>
<evidence type="ECO:0000250" key="3">
    <source>
        <dbReference type="UniProtKB" id="P14901"/>
    </source>
</evidence>
<evidence type="ECO:0000255" key="4"/>
<evidence type="ECO:0000256" key="5">
    <source>
        <dbReference type="SAM" id="MobiDB-lite"/>
    </source>
</evidence>
<evidence type="ECO:0000269" key="6">
    <source>
    </source>
</evidence>
<evidence type="ECO:0000305" key="7"/>
<evidence type="ECO:0000305" key="8">
    <source>
    </source>
</evidence>
<accession>Q5E9F2</accession>
<accession>Q3ZCK7</accession>
<accession>Q7M338</accession>
<dbReference type="EC" id="1.14.14.18" evidence="6"/>
<dbReference type="EMBL" id="BT020968">
    <property type="protein sequence ID" value="AAX08985.1"/>
    <property type="molecule type" value="mRNA"/>
</dbReference>
<dbReference type="EMBL" id="BC102105">
    <property type="protein sequence ID" value="AAI02106.4"/>
    <property type="molecule type" value="mRNA"/>
</dbReference>
<dbReference type="PIR" id="S13265">
    <property type="entry name" value="S13265"/>
</dbReference>
<dbReference type="RefSeq" id="NP_001014912.1">
    <property type="nucleotide sequence ID" value="NM_001014912.1"/>
</dbReference>
<dbReference type="SMR" id="Q5E9F2"/>
<dbReference type="FunCoup" id="Q5E9F2">
    <property type="interactions" value="157"/>
</dbReference>
<dbReference type="STRING" id="9913.ENSBTAP00000061215"/>
<dbReference type="ChEMBL" id="CHEMBL1255146"/>
<dbReference type="PaxDb" id="9913-ENSBTAP00000020701"/>
<dbReference type="Ensembl" id="ENSBTAT00000069776.2">
    <property type="protein sequence ID" value="ENSBTAP00000061215.2"/>
    <property type="gene ID" value="ENSBTAG00000015582.7"/>
</dbReference>
<dbReference type="GeneID" id="513221"/>
<dbReference type="KEGG" id="bta:513221"/>
<dbReference type="CTD" id="3162"/>
<dbReference type="VEuPathDB" id="HostDB:ENSBTAG00000015582"/>
<dbReference type="VGNC" id="VGNC:29885">
    <property type="gene designation" value="HMOX1"/>
</dbReference>
<dbReference type="eggNOG" id="KOG4480">
    <property type="taxonomic scope" value="Eukaryota"/>
</dbReference>
<dbReference type="GeneTree" id="ENSGT00390000017673"/>
<dbReference type="HOGENOM" id="CLU_057050_0_1_1"/>
<dbReference type="InParanoid" id="Q5E9F2"/>
<dbReference type="OrthoDB" id="652091at2759"/>
<dbReference type="TreeFam" id="TF314786"/>
<dbReference type="BRENDA" id="1.14.14.18">
    <property type="organism ID" value="908"/>
</dbReference>
<dbReference type="Reactome" id="R-BTA-189483">
    <property type="pathway name" value="Heme degradation"/>
</dbReference>
<dbReference type="Reactome" id="R-BTA-917937">
    <property type="pathway name" value="Iron uptake and transport"/>
</dbReference>
<dbReference type="Reactome" id="R-BTA-9609523">
    <property type="pathway name" value="Insertion of tail-anchored proteins into the endoplasmic reticulum membrane"/>
</dbReference>
<dbReference type="Reactome" id="R-BTA-9707564">
    <property type="pathway name" value="Cytoprotection by HMOX1"/>
</dbReference>
<dbReference type="Reactome" id="R-BTA-9707587">
    <property type="pathway name" value="Regulation of HMOX1 expression and activity"/>
</dbReference>
<dbReference type="SABIO-RK" id="Q5E9F2"/>
<dbReference type="Proteomes" id="UP000009136">
    <property type="component" value="Chromosome 5"/>
</dbReference>
<dbReference type="GO" id="GO:0005829">
    <property type="term" value="C:cytosol"/>
    <property type="evidence" value="ECO:0007669"/>
    <property type="project" value="Ensembl"/>
</dbReference>
<dbReference type="GO" id="GO:0005789">
    <property type="term" value="C:endoplasmic reticulum membrane"/>
    <property type="evidence" value="ECO:0000250"/>
    <property type="project" value="UniProtKB"/>
</dbReference>
<dbReference type="GO" id="GO:0005634">
    <property type="term" value="C:nucleus"/>
    <property type="evidence" value="ECO:0007669"/>
    <property type="project" value="Ensembl"/>
</dbReference>
<dbReference type="GO" id="GO:0048471">
    <property type="term" value="C:perinuclear region of cytoplasm"/>
    <property type="evidence" value="ECO:0007669"/>
    <property type="project" value="Ensembl"/>
</dbReference>
<dbReference type="GO" id="GO:0020037">
    <property type="term" value="F:heme binding"/>
    <property type="evidence" value="ECO:0000318"/>
    <property type="project" value="GO_Central"/>
</dbReference>
<dbReference type="GO" id="GO:0004392">
    <property type="term" value="F:heme oxygenase (decyclizing) activity"/>
    <property type="evidence" value="ECO:0000314"/>
    <property type="project" value="UniProtKB"/>
</dbReference>
<dbReference type="GO" id="GO:0046872">
    <property type="term" value="F:metal ion binding"/>
    <property type="evidence" value="ECO:0007669"/>
    <property type="project" value="UniProtKB-KW"/>
</dbReference>
<dbReference type="GO" id="GO:0042803">
    <property type="term" value="F:protein homodimerization activity"/>
    <property type="evidence" value="ECO:0007669"/>
    <property type="project" value="Ensembl"/>
</dbReference>
<dbReference type="GO" id="GO:0005198">
    <property type="term" value="F:structural molecule activity"/>
    <property type="evidence" value="ECO:0007669"/>
    <property type="project" value="Ensembl"/>
</dbReference>
<dbReference type="GO" id="GO:0071243">
    <property type="term" value="P:cellular response to arsenic-containing substance"/>
    <property type="evidence" value="ECO:0007669"/>
    <property type="project" value="Ensembl"/>
</dbReference>
<dbReference type="GO" id="GO:0071276">
    <property type="term" value="P:cellular response to cadmium ion"/>
    <property type="evidence" value="ECO:0007669"/>
    <property type="project" value="Ensembl"/>
</dbReference>
<dbReference type="GO" id="GO:0072719">
    <property type="term" value="P:cellular response to cisplatin"/>
    <property type="evidence" value="ECO:0007669"/>
    <property type="project" value="Ensembl"/>
</dbReference>
<dbReference type="GO" id="GO:0034605">
    <property type="term" value="P:cellular response to heat"/>
    <property type="evidence" value="ECO:0007669"/>
    <property type="project" value="Ensembl"/>
</dbReference>
<dbReference type="GO" id="GO:1904019">
    <property type="term" value="P:epithelial cell apoptotic process"/>
    <property type="evidence" value="ECO:0007669"/>
    <property type="project" value="Ensembl"/>
</dbReference>
<dbReference type="GO" id="GO:0034101">
    <property type="term" value="P:erythrocyte homeostasis"/>
    <property type="evidence" value="ECO:0007669"/>
    <property type="project" value="Ensembl"/>
</dbReference>
<dbReference type="GO" id="GO:0042167">
    <property type="term" value="P:heme catabolic process"/>
    <property type="evidence" value="ECO:0000318"/>
    <property type="project" value="GO_Central"/>
</dbReference>
<dbReference type="GO" id="GO:0006788">
    <property type="term" value="P:heme oxidation"/>
    <property type="evidence" value="ECO:0000318"/>
    <property type="project" value="GO_Central"/>
</dbReference>
<dbReference type="GO" id="GO:0006879">
    <property type="term" value="P:intracellular iron ion homeostasis"/>
    <property type="evidence" value="ECO:0007669"/>
    <property type="project" value="Ensembl"/>
</dbReference>
<dbReference type="GO" id="GO:0016236">
    <property type="term" value="P:macroautophagy"/>
    <property type="evidence" value="ECO:0007669"/>
    <property type="project" value="Ensembl"/>
</dbReference>
<dbReference type="GO" id="GO:0060586">
    <property type="term" value="P:multicellular organismal-level iron ion homeostasis"/>
    <property type="evidence" value="ECO:0007669"/>
    <property type="project" value="Ensembl"/>
</dbReference>
<dbReference type="GO" id="GO:0043922">
    <property type="term" value="P:negative regulation by host of viral transcription"/>
    <property type="evidence" value="ECO:0000315"/>
    <property type="project" value="AgBase"/>
</dbReference>
<dbReference type="GO" id="GO:1900016">
    <property type="term" value="P:negative regulation of cytokine production involved in inflammatory response"/>
    <property type="evidence" value="ECO:0007669"/>
    <property type="project" value="Ensembl"/>
</dbReference>
<dbReference type="GO" id="GO:1902042">
    <property type="term" value="P:negative regulation of extrinsic apoptotic signaling pathway via death domain receptors"/>
    <property type="evidence" value="ECO:0007669"/>
    <property type="project" value="Ensembl"/>
</dbReference>
<dbReference type="GO" id="GO:0110076">
    <property type="term" value="P:negative regulation of ferroptosis"/>
    <property type="evidence" value="ECO:0000250"/>
    <property type="project" value="UniProtKB"/>
</dbReference>
<dbReference type="GO" id="GO:0016242">
    <property type="term" value="P:negative regulation of macroautophagy"/>
    <property type="evidence" value="ECO:0007669"/>
    <property type="project" value="Ensembl"/>
</dbReference>
<dbReference type="GO" id="GO:0048662">
    <property type="term" value="P:negative regulation of smooth muscle cell proliferation"/>
    <property type="evidence" value="ECO:0007669"/>
    <property type="project" value="Ensembl"/>
</dbReference>
<dbReference type="GO" id="GO:1903901">
    <property type="term" value="P:negative regulation of viral life cycle"/>
    <property type="evidence" value="ECO:0000315"/>
    <property type="project" value="AgBase"/>
</dbReference>
<dbReference type="GO" id="GO:0045766">
    <property type="term" value="P:positive regulation of angiogenesis"/>
    <property type="evidence" value="ECO:0007669"/>
    <property type="project" value="Ensembl"/>
</dbReference>
<dbReference type="GO" id="GO:1903589">
    <property type="term" value="P:positive regulation of blood vessel endothelial cell proliferation involved in sprouting angiogenesis"/>
    <property type="evidence" value="ECO:0007669"/>
    <property type="project" value="Ensembl"/>
</dbReference>
<dbReference type="GO" id="GO:0090050">
    <property type="term" value="P:positive regulation of cell migration involved in sprouting angiogenesis"/>
    <property type="evidence" value="ECO:0007669"/>
    <property type="project" value="Ensembl"/>
</dbReference>
<dbReference type="GO" id="GO:1904037">
    <property type="term" value="P:positive regulation of epithelial cell apoptotic process"/>
    <property type="evidence" value="ECO:0007669"/>
    <property type="project" value="Ensembl"/>
</dbReference>
<dbReference type="GO" id="GO:0016239">
    <property type="term" value="P:positive regulation of macroautophagy"/>
    <property type="evidence" value="ECO:0007669"/>
    <property type="project" value="Ensembl"/>
</dbReference>
<dbReference type="GO" id="GO:0048661">
    <property type="term" value="P:positive regulation of smooth muscle cell proliferation"/>
    <property type="evidence" value="ECO:0007669"/>
    <property type="project" value="Ensembl"/>
</dbReference>
<dbReference type="GO" id="GO:0035094">
    <property type="term" value="P:response to nicotine"/>
    <property type="evidence" value="ECO:0007669"/>
    <property type="project" value="Ensembl"/>
</dbReference>
<dbReference type="GO" id="GO:0006979">
    <property type="term" value="P:response to oxidative stress"/>
    <property type="evidence" value="ECO:0000318"/>
    <property type="project" value="GO_Central"/>
</dbReference>
<dbReference type="GO" id="GO:0002246">
    <property type="term" value="P:wound healing involved in inflammatory response"/>
    <property type="evidence" value="ECO:0007669"/>
    <property type="project" value="Ensembl"/>
</dbReference>
<dbReference type="CDD" id="cd00232">
    <property type="entry name" value="HemeO-like"/>
    <property type="match status" value="1"/>
</dbReference>
<dbReference type="FunFam" id="1.20.910.10:FF:000001">
    <property type="entry name" value="Heme oxygenase 1"/>
    <property type="match status" value="1"/>
</dbReference>
<dbReference type="Gene3D" id="1.20.910.10">
    <property type="entry name" value="Heme oxygenase-like"/>
    <property type="match status" value="1"/>
</dbReference>
<dbReference type="InterPro" id="IPR002051">
    <property type="entry name" value="Haem_Oase"/>
</dbReference>
<dbReference type="InterPro" id="IPR016053">
    <property type="entry name" value="Haem_Oase-like"/>
</dbReference>
<dbReference type="InterPro" id="IPR016084">
    <property type="entry name" value="Haem_Oase-like_multi-hlx"/>
</dbReference>
<dbReference type="InterPro" id="IPR018207">
    <property type="entry name" value="Haem_oxygenase_CS"/>
</dbReference>
<dbReference type="PANTHER" id="PTHR10720">
    <property type="entry name" value="HEME OXYGENASE"/>
    <property type="match status" value="1"/>
</dbReference>
<dbReference type="PANTHER" id="PTHR10720:SF1">
    <property type="entry name" value="HEME OXYGENASE 1"/>
    <property type="match status" value="1"/>
</dbReference>
<dbReference type="Pfam" id="PF01126">
    <property type="entry name" value="Heme_oxygenase"/>
    <property type="match status" value="1"/>
</dbReference>
<dbReference type="PRINTS" id="PR00088">
    <property type="entry name" value="HAEMOXYGNASE"/>
</dbReference>
<dbReference type="SUPFAM" id="SSF48613">
    <property type="entry name" value="Heme oxygenase-like"/>
    <property type="match status" value="1"/>
</dbReference>
<dbReference type="PROSITE" id="PS00593">
    <property type="entry name" value="HEME_OXYGENASE"/>
    <property type="match status" value="1"/>
</dbReference>
<feature type="chain" id="PRO_0000209686" description="Heme oxygenase 1">
    <location>
        <begin position="1"/>
        <end position="289"/>
    </location>
</feature>
<feature type="chain" id="PRO_0000455620" description="Heme oxygenase 1 soluble form" evidence="2">
    <location>
        <begin position="1"/>
        <end position="266"/>
    </location>
</feature>
<feature type="topological domain" description="Cytoplasmic" evidence="2">
    <location>
        <begin position="1"/>
        <end position="266"/>
    </location>
</feature>
<feature type="transmembrane region" description="Helical; Anchor for type IV membrane protein" evidence="4">
    <location>
        <begin position="267"/>
        <end position="289"/>
    </location>
</feature>
<feature type="region of interest" description="Disordered" evidence="5">
    <location>
        <begin position="1"/>
        <end position="24"/>
    </location>
</feature>
<feature type="region of interest" description="Disordered" evidence="5">
    <location>
        <begin position="239"/>
        <end position="261"/>
    </location>
</feature>
<feature type="compositionally biased region" description="Polar residues" evidence="5">
    <location>
        <begin position="1"/>
        <end position="12"/>
    </location>
</feature>
<feature type="binding site" evidence="2">
    <location>
        <position position="19"/>
    </location>
    <ligand>
        <name>heme b</name>
        <dbReference type="ChEBI" id="CHEBI:60344"/>
    </ligand>
</feature>
<feature type="binding site" description="axial binding residue" evidence="2">
    <location>
        <position position="26"/>
    </location>
    <ligand>
        <name>heme b</name>
        <dbReference type="ChEBI" id="CHEBI:60344"/>
    </ligand>
    <ligandPart>
        <name>Fe</name>
        <dbReference type="ChEBI" id="CHEBI:18248"/>
    </ligandPart>
</feature>
<feature type="binding site" evidence="2">
    <location>
        <position position="135"/>
    </location>
    <ligand>
        <name>heme b</name>
        <dbReference type="ChEBI" id="CHEBI:60344"/>
    </ligand>
</feature>
<feature type="binding site" evidence="2">
    <location>
        <position position="184"/>
    </location>
    <ligand>
        <name>heme b</name>
        <dbReference type="ChEBI" id="CHEBI:60344"/>
    </ligand>
</feature>
<feature type="site" description="Important for catalytic activity" evidence="2">
    <location>
        <position position="141"/>
    </location>
</feature>
<feature type="modified residue" description="Phosphoserine" evidence="1">
    <location>
        <position position="243"/>
    </location>
</feature>
<feature type="sequence conflict" description="In Ref. 3; AA sequence." evidence="7" ref="3">
    <original>Q</original>
    <variation>E</variation>
    <location>
        <position position="28"/>
    </location>
</feature>
<feature type="sequence conflict" description="In Ref. 3; AA sequence." evidence="7" ref="3">
    <original>P</original>
    <variation>PH</variation>
    <location>
        <position position="100"/>
    </location>
</feature>
<name>HMOX1_BOVIN</name>
<reference key="1">
    <citation type="journal article" date="2005" name="BMC Genomics">
        <title>Characterization of 954 bovine full-CDS cDNA sequences.</title>
        <authorList>
            <person name="Harhay G.P."/>
            <person name="Sonstegard T.S."/>
            <person name="Keele J.W."/>
            <person name="Heaton M.P."/>
            <person name="Clawson M.L."/>
            <person name="Snelling W.M."/>
            <person name="Wiedmann R.T."/>
            <person name="Van Tassell C.P."/>
            <person name="Smith T.P.L."/>
        </authorList>
    </citation>
    <scope>NUCLEOTIDE SEQUENCE [LARGE SCALE MRNA]</scope>
</reference>
<reference key="2">
    <citation type="submission" date="2005-08" db="EMBL/GenBank/DDBJ databases">
        <authorList>
            <consortium name="NIH - Mammalian Gene Collection (MGC) project"/>
        </authorList>
    </citation>
    <scope>NUCLEOTIDE SEQUENCE [LARGE SCALE MRNA]</scope>
    <source>
        <strain>Crossbred X Angus</strain>
        <tissue>Ileum</tissue>
    </source>
</reference>
<reference key="3">
    <citation type="journal article" date="1990" name="Arch. Biochem. Biophys.">
        <title>Structural studies on bovine spleen heme oxygenase. Immunological and structural diversity among mammalian heme oxygenase enzymes.</title>
        <authorList>
            <person name="Schacter B.A."/>
            <person name="Cripps V."/>
            <person name="Troxler R.F."/>
            <person name="Offner G.D."/>
        </authorList>
    </citation>
    <scope>PROTEIN SEQUENCE OF 24-33; 41-49; 88-113; 138-147; 155-158; 187-196 AND 200-205</scope>
    <source>
        <tissue>Spleen</tissue>
    </source>
</reference>
<reference key="4">
    <citation type="journal article" date="1982" name="J. Biol. Chem.">
        <title>Purification and properties of bovine spleen heme oxygenase. Amino acid composition and sites of action of inhibitors of heme oxidation.</title>
        <authorList>
            <person name="Yoshinaga T."/>
            <person name="Sassa S."/>
            <person name="Kappas A."/>
        </authorList>
    </citation>
    <scope>FUNCTION</scope>
    <scope>CATALYTIC ACTIVITY</scope>
    <scope>BIOPHYSICOCHEMICAL PROPERTIES</scope>
    <scope>ACTIVITY REGULATION</scope>
</reference>